<feature type="initiator methionine" description="Removed" evidence="13 20">
    <location>
        <position position="1"/>
    </location>
</feature>
<feature type="chain" id="PRO_0000064429" description="Actin-binding protein">
    <location>
        <begin position="2"/>
        <end position="592"/>
    </location>
</feature>
<feature type="domain" description="ADF-H" evidence="2">
    <location>
        <begin position="7"/>
        <end position="136"/>
    </location>
</feature>
<feature type="repeat" description="1">
    <location>
        <begin position="200"/>
        <end position="209"/>
    </location>
</feature>
<feature type="repeat" description="2">
    <location>
        <begin position="436"/>
        <end position="445"/>
    </location>
</feature>
<feature type="domain" description="SH3" evidence="1">
    <location>
        <begin position="532"/>
        <end position="592"/>
    </location>
</feature>
<feature type="repeat" description="3">
    <location>
        <begin position="566"/>
        <end position="575"/>
    </location>
</feature>
<feature type="region of interest" description="Disordered" evidence="3">
    <location>
        <begin position="144"/>
        <end position="541"/>
    </location>
</feature>
<feature type="region of interest" description="3 X 10 AA approximate repeats (acidic)">
    <location>
        <begin position="200"/>
        <end position="575"/>
    </location>
</feature>
<feature type="compositionally biased region" description="Polar residues" evidence="3">
    <location>
        <begin position="144"/>
        <end position="155"/>
    </location>
</feature>
<feature type="compositionally biased region" description="Basic and acidic residues" evidence="3">
    <location>
        <begin position="237"/>
        <end position="248"/>
    </location>
</feature>
<feature type="compositionally biased region" description="Basic and acidic residues" evidence="3">
    <location>
        <begin position="270"/>
        <end position="279"/>
    </location>
</feature>
<feature type="compositionally biased region" description="Polar residues" evidence="3">
    <location>
        <begin position="280"/>
        <end position="296"/>
    </location>
</feature>
<feature type="compositionally biased region" description="Basic and acidic residues" evidence="3">
    <location>
        <begin position="297"/>
        <end position="312"/>
    </location>
</feature>
<feature type="compositionally biased region" description="Basic and acidic residues" evidence="3">
    <location>
        <begin position="332"/>
        <end position="341"/>
    </location>
</feature>
<feature type="compositionally biased region" description="Basic and acidic residues" evidence="3">
    <location>
        <begin position="350"/>
        <end position="359"/>
    </location>
</feature>
<feature type="compositionally biased region" description="Basic and acidic residues" evidence="3">
    <location>
        <begin position="398"/>
        <end position="414"/>
    </location>
</feature>
<feature type="compositionally biased region" description="Acidic residues" evidence="3">
    <location>
        <begin position="427"/>
        <end position="446"/>
    </location>
</feature>
<feature type="compositionally biased region" description="Acidic residues" evidence="3">
    <location>
        <begin position="490"/>
        <end position="505"/>
    </location>
</feature>
<feature type="compositionally biased region" description="Low complexity" evidence="3">
    <location>
        <begin position="506"/>
        <end position="516"/>
    </location>
</feature>
<feature type="modified residue" description="N-acetylalanine" evidence="13 20">
    <location>
        <position position="2"/>
    </location>
</feature>
<feature type="modified residue" description="Phosphothreonine" evidence="18">
    <location>
        <position position="165"/>
    </location>
</feature>
<feature type="modified residue" description="Phosphoserine" evidence="18">
    <location>
        <position position="167"/>
    </location>
</feature>
<feature type="modified residue" description="Phosphoserine" evidence="15 17 18">
    <location>
        <position position="169"/>
    </location>
</feature>
<feature type="modified residue" description="Phosphothreonine" evidence="15 16 17 18">
    <location>
        <position position="181"/>
    </location>
</feature>
<feature type="modified residue" description="Phosphoserine" evidence="15 17">
    <location>
        <position position="183"/>
    </location>
</feature>
<feature type="modified residue" description="Phosphoserine" evidence="17 18">
    <location>
        <position position="313"/>
    </location>
</feature>
<feature type="modified residue" description="Phosphoserine" evidence="16 17 18">
    <location>
        <position position="365"/>
    </location>
</feature>
<feature type="modified residue" description="Phosphoserine" evidence="15 17">
    <location>
        <position position="389"/>
    </location>
</feature>
<feature type="modified residue" description="Phosphoserine" evidence="17">
    <location>
        <position position="458"/>
    </location>
</feature>
<feature type="modified residue" description="Phosphoserine" evidence="16 17">
    <location>
        <position position="481"/>
    </location>
</feature>
<feature type="cross-link" description="Glycyl lysine isopeptide (Lys-Gly) (interchain with G-Cter in ubiquitin)" evidence="19">
    <location>
        <position position="464"/>
    </location>
</feature>
<feature type="mutagenesis site" description="In ABP1-1; moderately reduces actin binding and partially reduces ARP2/3 complex activation; when associated with A-24." evidence="11">
    <original>K</original>
    <variation>A</variation>
    <location>
        <position position="21"/>
    </location>
</feature>
<feature type="mutagenesis site" description="In ABP1-1; moderately reduces actin binding and partially reduces ARP2/3 complex activation; when associated with A-21." evidence="11">
    <original>R</original>
    <variation>A</variation>
    <location>
        <position position="24"/>
    </location>
</feature>
<feature type="mutagenesis site" description="In ABP1-2; strongly reduces actin binding and abolishes ARP2/3 complex activation." evidence="11">
    <original>K</original>
    <variation>A</variation>
    <location>
        <position position="80"/>
    </location>
</feature>
<feature type="mutagenesis site" description="In ABP1-3; reduces actin binding and abolishes ARP2/3 complex activation; when associated with A-96." evidence="11">
    <original>K</original>
    <variation>A</variation>
    <location>
        <position position="94"/>
    </location>
</feature>
<feature type="mutagenesis site" description="In ABP1-3; reduces actin binding and abolishes ARP2/3 complex activation; when associated with A-94." evidence="11">
    <original>R</original>
    <variation>A</variation>
    <location>
        <position position="96"/>
    </location>
</feature>
<feature type="mutagenesis site" description="In ABP1-4; no effect; when associated with A-125." evidence="11">
    <original>D</original>
    <variation>A</variation>
    <location>
        <position position="122"/>
    </location>
</feature>
<feature type="mutagenesis site" description="In ABP1-4; no effect; when associated with A-122." evidence="11">
    <original>D</original>
    <variation>A</variation>
    <location>
        <position position="125"/>
    </location>
</feature>
<feature type="mutagenesis site" description="In ABP1-5; moderately reduces actin binding and abolishes ARP2/3 complex activation." evidence="11">
    <original>K</original>
    <variation>A</variation>
    <location>
        <position position="134"/>
    </location>
</feature>
<feature type="mutagenesis site" description="Abolishes ARP2/3 complex activation, but not actin binding." evidence="5">
    <original>DDW</original>
    <variation>AAA</variation>
    <location>
        <begin position="201"/>
        <end position="203"/>
    </location>
</feature>
<feature type="mutagenesis site" description="Abolishes ARP2/3 complex activation, but not actin binding." evidence="5">
    <original>DDW</original>
    <variation>AAA</variation>
    <location>
        <begin position="437"/>
        <end position="439"/>
    </location>
</feature>
<feature type="mutagenesis site" description="Abolishes protein binding." evidence="6">
    <original>W</original>
    <variation>A</variation>
    <location>
        <position position="569"/>
    </location>
</feature>
<feature type="sequence conflict" description="In Ref. 1; CAA36075." evidence="14" ref="1">
    <original>L</original>
    <variation>S</variation>
    <location>
        <position position="58"/>
    </location>
</feature>
<feature type="sequence conflict" description="In Ref. 1; CAA36075." evidence="14" ref="1">
    <original>K</original>
    <variation>I</variation>
    <location>
        <position position="312"/>
    </location>
</feature>
<feature type="helix" evidence="21">
    <location>
        <begin position="12"/>
        <end position="24"/>
    </location>
</feature>
<feature type="strand" evidence="21">
    <location>
        <begin position="32"/>
        <end position="37"/>
    </location>
</feature>
<feature type="strand" evidence="21">
    <location>
        <begin position="43"/>
        <end position="50"/>
    </location>
</feature>
<feature type="helix" evidence="21">
    <location>
        <begin position="52"/>
        <end position="56"/>
    </location>
</feature>
<feature type="strand" evidence="21">
    <location>
        <begin position="65"/>
        <end position="71"/>
    </location>
</feature>
<feature type="strand" evidence="21">
    <location>
        <begin position="80"/>
        <end position="86"/>
    </location>
</feature>
<feature type="helix" evidence="21">
    <location>
        <begin position="93"/>
        <end position="109"/>
    </location>
</feature>
<feature type="strand" evidence="21">
    <location>
        <begin position="115"/>
        <end position="122"/>
    </location>
</feature>
<feature type="helix" evidence="21">
    <location>
        <begin position="123"/>
        <end position="126"/>
    </location>
</feature>
<feature type="helix" evidence="21">
    <location>
        <begin position="128"/>
        <end position="136"/>
    </location>
</feature>
<feature type="strand" evidence="22">
    <location>
        <begin position="537"/>
        <end position="541"/>
    </location>
</feature>
<feature type="strand" evidence="23">
    <location>
        <begin position="546"/>
        <end position="550"/>
    </location>
</feature>
<feature type="strand" evidence="22">
    <location>
        <begin position="558"/>
        <end position="563"/>
    </location>
</feature>
<feature type="strand" evidence="22">
    <location>
        <begin position="566"/>
        <end position="574"/>
    </location>
</feature>
<feature type="turn" evidence="22">
    <location>
        <begin position="575"/>
        <end position="577"/>
    </location>
</feature>
<feature type="strand" evidence="22">
    <location>
        <begin position="580"/>
        <end position="584"/>
    </location>
</feature>
<feature type="helix" evidence="22">
    <location>
        <begin position="585"/>
        <end position="587"/>
    </location>
</feature>
<feature type="strand" evidence="22">
    <location>
        <begin position="588"/>
        <end position="590"/>
    </location>
</feature>
<sequence>MALEPIDYTTHSREIDAEYLKIVRGSDPDTTWLIISPNAKKEYEPESTGSSFHDFLQLFDETKVQYGLARVSPPGSDVEKIIIIGWCPDSAPLKTRASFAANFAAVANNLFKGYHVQVTARDEDDLDENELLMKISNAAGARYSIQTSSKQQGKASTPPVKKSFTPSKSPAPVSKKEPVKTPSPAPAAKISSRVNDNNDDDDWNEPELKERDFDQAPLKPNQSSYKPIGKIDLQKVIAEEKAKEDPRLVQKPTAAGSKIDPSSDIANLKNESKLKRDSEFNSFLGTTKPPSMTESSLKNDDDKVIKGFRNEKSPAQLWAERKAKQNSGNAETKAEAPKPEVPEDEPEGEPDVKDLKSKFEGLAASEKEEEEMENKFAPPPKKSEPTIISPKPFSKPQEPVKAEEAEQPKTDYKKIGNPLPGMHIEADNEEEPEENDDDWDDDEDEAAQPPLPSRNVASGAPVQKEEPEQEEIAPSLPSRNSIPAPKQEEAPEQAPEEEIEEEAEEAAPQLPSRSSAAPPPPPRRATPEKKPKENPWATAEYDYDAAEDNELTFVENDKIINIEFVDDDWWLGELEKDGSKGLFPSNYVSLGN</sequence>
<organism>
    <name type="scientific">Saccharomyces cerevisiae (strain ATCC 204508 / S288c)</name>
    <name type="common">Baker's yeast</name>
    <dbReference type="NCBI Taxonomy" id="559292"/>
    <lineage>
        <taxon>Eukaryota</taxon>
        <taxon>Fungi</taxon>
        <taxon>Dikarya</taxon>
        <taxon>Ascomycota</taxon>
        <taxon>Saccharomycotina</taxon>
        <taxon>Saccharomycetes</taxon>
        <taxon>Saccharomycetales</taxon>
        <taxon>Saccharomycetaceae</taxon>
        <taxon>Saccharomyces</taxon>
    </lineage>
</organism>
<name>ABP1_YEAST</name>
<reference key="1">
    <citation type="journal article" date="1990" name="Nature">
        <title>Homology of a yeast actin-binding protein to signal transduction proteins and myosin-I.</title>
        <authorList>
            <person name="Drubin D.G."/>
            <person name="Mulholland J."/>
            <person name="Zhu Z."/>
            <person name="Botstein D."/>
        </authorList>
    </citation>
    <scope>NUCLEOTIDE SEQUENCE [GENOMIC DNA]</scope>
</reference>
<reference key="2">
    <citation type="journal article" date="1992" name="Nature">
        <title>The complete DNA sequence of yeast chromosome III.</title>
        <authorList>
            <person name="Oliver S.G."/>
            <person name="van der Aart Q.J.M."/>
            <person name="Agostoni-Carbone M.L."/>
            <person name="Aigle M."/>
            <person name="Alberghina L."/>
            <person name="Alexandraki D."/>
            <person name="Antoine G."/>
            <person name="Anwar R."/>
            <person name="Ballesta J.P.G."/>
            <person name="Benit P."/>
            <person name="Berben G."/>
            <person name="Bergantino E."/>
            <person name="Biteau N."/>
            <person name="Bolle P.-A."/>
            <person name="Bolotin-Fukuhara M."/>
            <person name="Brown A."/>
            <person name="Brown A.J.P."/>
            <person name="Buhler J.-M."/>
            <person name="Carcano C."/>
            <person name="Carignani G."/>
            <person name="Cederberg H."/>
            <person name="Chanet R."/>
            <person name="Contreras R."/>
            <person name="Crouzet M."/>
            <person name="Daignan-Fornier B."/>
            <person name="Defoor E."/>
            <person name="Delgado M.D."/>
            <person name="Demolder J."/>
            <person name="Doira C."/>
            <person name="Dubois E."/>
            <person name="Dujon B."/>
            <person name="Duesterhoeft A."/>
            <person name="Erdmann D."/>
            <person name="Esteban M."/>
            <person name="Fabre F."/>
            <person name="Fairhead C."/>
            <person name="Faye G."/>
            <person name="Feldmann H."/>
            <person name="Fiers W."/>
            <person name="Francingues-Gaillard M.-C."/>
            <person name="Franco L."/>
            <person name="Frontali L."/>
            <person name="Fukuhara H."/>
            <person name="Fuller L.J."/>
            <person name="Galland P."/>
            <person name="Gent M.E."/>
            <person name="Gigot D."/>
            <person name="Gilliquet V."/>
            <person name="Glansdorff N."/>
            <person name="Goffeau A."/>
            <person name="Grenson M."/>
            <person name="Grisanti P."/>
            <person name="Grivell L.A."/>
            <person name="de Haan M."/>
            <person name="Haasemann M."/>
            <person name="Hatat D."/>
            <person name="Hoenicka J."/>
            <person name="Hegemann J.H."/>
            <person name="Herbert C.J."/>
            <person name="Hilger F."/>
            <person name="Hohmann S."/>
            <person name="Hollenberg C.P."/>
            <person name="Huse K."/>
            <person name="Iborra F."/>
            <person name="Indge K.J."/>
            <person name="Isono K."/>
            <person name="Jacq C."/>
            <person name="Jacquet M."/>
            <person name="James C.M."/>
            <person name="Jauniaux J.-C."/>
            <person name="Jia Y."/>
            <person name="Jimenez A."/>
            <person name="Kelly A."/>
            <person name="Kleinhans U."/>
            <person name="Kreisl P."/>
            <person name="Lanfranchi G."/>
            <person name="Lewis C."/>
            <person name="van der Linden C.G."/>
            <person name="Lucchini G."/>
            <person name="Lutzenkirchen K."/>
            <person name="Maat M.J."/>
            <person name="Mallet L."/>
            <person name="Mannhaupt G."/>
            <person name="Martegani E."/>
            <person name="Mathieu A."/>
            <person name="Maurer C.T.C."/>
            <person name="McConnell D."/>
            <person name="McKee R.A."/>
            <person name="Messenguy F."/>
            <person name="Mewes H.-W."/>
            <person name="Molemans F."/>
            <person name="Montague M.A."/>
            <person name="Muzi Falconi M."/>
            <person name="Navas L."/>
            <person name="Newlon C.S."/>
            <person name="Noone D."/>
            <person name="Pallier C."/>
            <person name="Panzeri L."/>
            <person name="Pearson B.M."/>
            <person name="Perea J."/>
            <person name="Philippsen P."/>
            <person name="Pierard A."/>
            <person name="Planta R.J."/>
            <person name="Plevani P."/>
            <person name="Poetsch B."/>
            <person name="Pohl F.M."/>
            <person name="Purnelle B."/>
            <person name="Ramezani Rad M."/>
            <person name="Rasmussen S.W."/>
            <person name="Raynal A."/>
            <person name="Remacha M.A."/>
            <person name="Richterich P."/>
            <person name="Roberts A.B."/>
            <person name="Rodriguez F."/>
            <person name="Sanz E."/>
            <person name="Schaaff-Gerstenschlaeger I."/>
            <person name="Scherens B."/>
            <person name="Schweitzer B."/>
            <person name="Shu Y."/>
            <person name="Skala J."/>
            <person name="Slonimski P.P."/>
            <person name="Sor F."/>
            <person name="Soustelle C."/>
            <person name="Spiegelberg R."/>
            <person name="Stateva L.I."/>
            <person name="Steensma H.Y."/>
            <person name="Steiner S."/>
            <person name="Thierry A."/>
            <person name="Thireos G."/>
            <person name="Tzermia M."/>
            <person name="Urrestarazu L.A."/>
            <person name="Valle G."/>
            <person name="Vetter I."/>
            <person name="van Vliet-Reedijk J.C."/>
            <person name="Voet M."/>
            <person name="Volckaert G."/>
            <person name="Vreken P."/>
            <person name="Wang H."/>
            <person name="Warmington J.R."/>
            <person name="von Wettstein D."/>
            <person name="Wicksteed B.L."/>
            <person name="Wilson C."/>
            <person name="Wurst H."/>
            <person name="Xu G."/>
            <person name="Yoshikawa A."/>
            <person name="Zimmermann F.K."/>
            <person name="Sgouros J.G."/>
        </authorList>
    </citation>
    <scope>NUCLEOTIDE SEQUENCE [LARGE SCALE GENOMIC DNA]</scope>
    <source>
        <strain>ATCC 204508 / S288c</strain>
    </source>
</reference>
<reference key="3">
    <citation type="journal article" date="2014" name="G3 (Bethesda)">
        <title>The reference genome sequence of Saccharomyces cerevisiae: Then and now.</title>
        <authorList>
            <person name="Engel S.R."/>
            <person name="Dietrich F.S."/>
            <person name="Fisk D.G."/>
            <person name="Binkley G."/>
            <person name="Balakrishnan R."/>
            <person name="Costanzo M.C."/>
            <person name="Dwight S.S."/>
            <person name="Hitz B.C."/>
            <person name="Karra K."/>
            <person name="Nash R.S."/>
            <person name="Weng S."/>
            <person name="Wong E.D."/>
            <person name="Lloyd P."/>
            <person name="Skrzypek M.S."/>
            <person name="Miyasato S.R."/>
            <person name="Simison M."/>
            <person name="Cherry J.M."/>
        </authorList>
    </citation>
    <scope>GENOME REANNOTATION</scope>
    <source>
        <strain>ATCC 204508 / S288c</strain>
    </source>
</reference>
<reference key="4">
    <citation type="submission" date="2005-06" db="UniProtKB">
        <authorList>
            <person name="Bienvenut W.V."/>
            <person name="Peters C."/>
        </authorList>
    </citation>
    <scope>PROTEIN SEQUENCE OF 2-13 AND 97-112</scope>
    <scope>CLEAVAGE OF INITIATOR METHIONINE</scope>
    <scope>ACETYLATION AT ALA-2</scope>
    <scope>IDENTIFICATION BY MASS SPECTROMETRY</scope>
</reference>
<reference key="5">
    <citation type="journal article" date="1996" name="Mol. Cell. Biol.">
        <title>A conserved proline-rich region of the Saccharomyces cerevisiae cyclase-associated protein binds SH3 domains and modulates cytoskeletal localization.</title>
        <authorList>
            <person name="Freeman N.L."/>
            <person name="Lila T."/>
            <person name="Mintzer K.A."/>
            <person name="Chen Z."/>
            <person name="Pahk A.J."/>
            <person name="Ren R."/>
            <person name="Drubin D.G."/>
            <person name="Field J."/>
        </authorList>
    </citation>
    <scope>INTERACTION WITH SRV2</scope>
</reference>
<reference key="6">
    <citation type="journal article" date="1999" name="Genetics">
        <title>In vivo analysis of the domains of yeast Rvs167p suggests Rvs167p function is mediated through multiple protein interactions.</title>
        <authorList>
            <person name="Colwill K."/>
            <person name="Field D."/>
            <person name="Moore L."/>
            <person name="Friesen J."/>
            <person name="Andrews B."/>
        </authorList>
    </citation>
    <scope>INTERACTION WITH RVS167</scope>
</reference>
<reference key="7">
    <citation type="journal article" date="2001" name="J. Cell Biol.">
        <title>Activation of the Arp2/3 complex by the actin filament binding protein Abp1p.</title>
        <authorList>
            <person name="Goode B.L."/>
            <person name="Rodal A.A."/>
            <person name="Barnes G."/>
            <person name="Drubin D.G."/>
        </authorList>
    </citation>
    <scope>FUNCTION</scope>
    <scope>INTERACTION WITH ACTIN AND ARP2/3 COMPLEX</scope>
    <scope>MUTAGENESIS OF 201-ASP--TRP-203 AND 437-ASP--TRP-439</scope>
</reference>
<reference key="8">
    <citation type="journal article" date="2002" name="J. Cell Sci.">
        <title>Sla1p couples the yeast endocytic machinery to proteins regulating actin dynamics.</title>
        <authorList>
            <person name="Warren D.T."/>
            <person name="Andrews P.D."/>
            <person name="Gourlay C.W."/>
            <person name="Ayscough K.R."/>
        </authorList>
    </citation>
    <scope>INTERACTION WITH SLA1</scope>
    <scope>SUBCELLULAR LOCATION</scope>
</reference>
<reference key="9">
    <citation type="journal article" date="2003" name="Nature">
        <title>Global analysis of protein localization in budding yeast.</title>
        <authorList>
            <person name="Huh W.-K."/>
            <person name="Falvo J.V."/>
            <person name="Gerke L.C."/>
            <person name="Carroll A.S."/>
            <person name="Howson R.W."/>
            <person name="Weissman J.S."/>
            <person name="O'Shea E.K."/>
        </authorList>
    </citation>
    <scope>SUBCELLULAR LOCATION [LARGE SCALE ANALYSIS]</scope>
</reference>
<reference key="10">
    <citation type="journal article" date="2003" name="Nature">
        <title>Global analysis of protein expression in yeast.</title>
        <authorList>
            <person name="Ghaemmaghami S."/>
            <person name="Huh W.-K."/>
            <person name="Bower K."/>
            <person name="Howson R.W."/>
            <person name="Belle A."/>
            <person name="Dephoure N."/>
            <person name="O'Shea E.K."/>
            <person name="Weissman J.S."/>
        </authorList>
    </citation>
    <scope>LEVEL OF PROTEIN EXPRESSION [LARGE SCALE ANALYSIS]</scope>
</reference>
<reference key="11">
    <citation type="journal article" date="2004" name="PLoS Biol.">
        <title>Protein interaction networks by proteome peptide scanning.</title>
        <authorList>
            <person name="Landgraf C."/>
            <person name="Panni S."/>
            <person name="Montecchi-Palazzi L."/>
            <person name="Castagnoli L."/>
            <person name="Schneider-Mergener J."/>
            <person name="Volkmer-Engert R."/>
            <person name="Cesareni G."/>
        </authorList>
    </citation>
    <scope>INTERACTION WITH APP1; PRK1; SCP1 AND YIR003W</scope>
</reference>
<reference key="12">
    <citation type="journal article" date="2007" name="J. Proteome Res.">
        <title>Large-scale phosphorylation analysis of alpha-factor-arrested Saccharomyces cerevisiae.</title>
        <authorList>
            <person name="Li X."/>
            <person name="Gerber S.A."/>
            <person name="Rudner A.D."/>
            <person name="Beausoleil S.A."/>
            <person name="Haas W."/>
            <person name="Villen J."/>
            <person name="Elias J.E."/>
            <person name="Gygi S.P."/>
        </authorList>
    </citation>
    <scope>PHOSPHORYLATION [LARGE SCALE ANALYSIS] AT THR-181; SER-365 AND SER-481</scope>
    <scope>IDENTIFICATION BY MASS SPECTROMETRY [LARGE SCALE ANALYSIS]</scope>
    <source>
        <strain>ADR376</strain>
    </source>
</reference>
<reference key="13">
    <citation type="journal article" date="2007" name="Proc. Natl. Acad. Sci. U.S.A.">
        <title>Analysis of phosphorylation sites on proteins from Saccharomyces cerevisiae by electron transfer dissociation (ETD) mass spectrometry.</title>
        <authorList>
            <person name="Chi A."/>
            <person name="Huttenhower C."/>
            <person name="Geer L.Y."/>
            <person name="Coon J.J."/>
            <person name="Syka J.E.P."/>
            <person name="Bai D.L."/>
            <person name="Shabanowitz J."/>
            <person name="Burke D.J."/>
            <person name="Troyanskaya O.G."/>
            <person name="Hunt D.F."/>
        </authorList>
    </citation>
    <scope>PHOSPHORYLATION [LARGE SCALE ANALYSIS] AT SER-169; THR-181; SER-183 AND SER-389</scope>
    <scope>IDENTIFICATION BY MASS SPECTROMETRY [LARGE SCALE ANALYSIS]</scope>
</reference>
<reference key="14">
    <citation type="journal article" date="2008" name="Mol. Cell. Proteomics">
        <title>A multidimensional chromatography technology for in-depth phosphoproteome analysis.</title>
        <authorList>
            <person name="Albuquerque C.P."/>
            <person name="Smolka M.B."/>
            <person name="Payne S.H."/>
            <person name="Bafna V."/>
            <person name="Eng J."/>
            <person name="Zhou H."/>
        </authorList>
    </citation>
    <scope>PHOSPHORYLATION [LARGE SCALE ANALYSIS] AT SER-169; THR-181; SER-183; SER-313; SER-365; SER-389; SER-458 AND SER-481</scope>
    <scope>IDENTIFICATION BY MASS SPECTROMETRY [LARGE SCALE ANALYSIS]</scope>
</reference>
<reference key="15">
    <citation type="journal article" date="2009" name="Science">
        <title>Global analysis of Cdk1 substrate phosphorylation sites provides insights into evolution.</title>
        <authorList>
            <person name="Holt L.J."/>
            <person name="Tuch B.B."/>
            <person name="Villen J."/>
            <person name="Johnson A.D."/>
            <person name="Gygi S.P."/>
            <person name="Morgan D.O."/>
        </authorList>
    </citation>
    <scope>PHOSPHORYLATION [LARGE SCALE ANALYSIS] AT THR-165; SER-167; SER-169; THR-181; SER-313 AND SER-365</scope>
    <scope>IDENTIFICATION BY MASS SPECTROMETRY [LARGE SCALE ANALYSIS]</scope>
</reference>
<reference key="16">
    <citation type="journal article" date="2012" name="Proc. Natl. Acad. Sci. U.S.A.">
        <title>N-terminal acetylome analyses and functional insights of the N-terminal acetyltransferase NatB.</title>
        <authorList>
            <person name="Van Damme P."/>
            <person name="Lasa M."/>
            <person name="Polevoda B."/>
            <person name="Gazquez C."/>
            <person name="Elosegui-Artola A."/>
            <person name="Kim D.S."/>
            <person name="De Juan-Pardo E."/>
            <person name="Demeyer K."/>
            <person name="Hole K."/>
            <person name="Larrea E."/>
            <person name="Timmerman E."/>
            <person name="Prieto J."/>
            <person name="Arnesen T."/>
            <person name="Sherman F."/>
            <person name="Gevaert K."/>
            <person name="Aldabe R."/>
        </authorList>
    </citation>
    <scope>ACETYLATION [LARGE SCALE ANALYSIS] AT ALA-2</scope>
    <scope>CLEAVAGE OF INITIATOR METHIONINE [LARGE SCALE ANALYSIS]</scope>
    <scope>IDENTIFICATION BY MASS SPECTROMETRY [LARGE SCALE ANALYSIS]</scope>
</reference>
<reference key="17">
    <citation type="journal article" date="2012" name="Proteomics">
        <title>Sites of ubiquitin attachment in Saccharomyces cerevisiae.</title>
        <authorList>
            <person name="Starita L.M."/>
            <person name="Lo R.S."/>
            <person name="Eng J.K."/>
            <person name="von Haller P.D."/>
            <person name="Fields S."/>
        </authorList>
    </citation>
    <scope>UBIQUITINATION [LARGE SCALE ANALYSIS] AT LYS-464</scope>
    <scope>IDENTIFICATION BY MASS SPECTROMETRY [LARGE SCALE ANALYSIS]</scope>
</reference>
<reference key="18">
    <citation type="journal article" date="2002" name="J. Biol. Chem.">
        <title>Unusual binding properties of the SH3 domain of the yeast actin-binding protein Abp1: structural and functional analysis.</title>
        <authorList>
            <person name="Fazi B."/>
            <person name="Cope M.J.T.V."/>
            <person name="Douangamath A."/>
            <person name="Ferracuti S."/>
            <person name="Schirwitz K."/>
            <person name="Zucconi A."/>
            <person name="Drubin D.G."/>
            <person name="Wilmanns M."/>
            <person name="Cesareni G."/>
            <person name="Castagnoli L."/>
        </authorList>
    </citation>
    <scope>X-RAY CRYSTALLOGRAPHY (1.3 ANGSTROMS) OF SH3 DOMAIN</scope>
    <scope>MUTAGENESIS OF TRP-569</scope>
    <scope>INTERACTION WITH ARK1 AND PRK1</scope>
</reference>
<reference key="19">
    <citation type="journal article" date="2005" name="Mol. Biol. Cell">
        <title>Structural and functional dissection of the Abp1 ADFH actin-binding domain reveals versatile in vivo adapter functions.</title>
        <authorList>
            <person name="Quintero-Monzon O."/>
            <person name="Rodal A.A."/>
            <person name="Strokopytov B."/>
            <person name="Almo S.C."/>
            <person name="Goode B.L."/>
        </authorList>
    </citation>
    <scope>X-RAY CRYSTALLOGRAPHY (2.1 ANGSTROMS) OF ADF DOMAIN</scope>
    <scope>MUTAGENESIS OF LYS-21; ARG-24; LYS-80; LYS-94; ARG-96; ASP-122; ASP-125 AND LYS-134</scope>
    <scope>SUBCELLULAR LOCATION</scope>
</reference>
<protein>
    <recommendedName>
        <fullName>Actin-binding protein</fullName>
    </recommendedName>
</protein>
<dbReference type="EMBL" id="X51780">
    <property type="protein sequence ID" value="CAA36075.1"/>
    <property type="molecule type" value="Genomic_DNA"/>
</dbReference>
<dbReference type="EMBL" id="X59720">
    <property type="protein sequence ID" value="CAA42253.1"/>
    <property type="molecule type" value="Genomic_DNA"/>
</dbReference>
<dbReference type="EMBL" id="BK006937">
    <property type="protein sequence ID" value="DAA07557.1"/>
    <property type="molecule type" value="Genomic_DNA"/>
</dbReference>
<dbReference type="PIR" id="S19503">
    <property type="entry name" value="LLBY"/>
</dbReference>
<dbReference type="RefSeq" id="NP_010012.1">
    <property type="nucleotide sequence ID" value="NM_001178794.1"/>
</dbReference>
<dbReference type="PDB" id="1HQZ">
    <property type="method" value="X-ray"/>
    <property type="resolution" value="2.10 A"/>
    <property type="chains" value="1/2/3/4/5/6/7/8/9=1-141"/>
</dbReference>
<dbReference type="PDB" id="1JO8">
    <property type="method" value="X-ray"/>
    <property type="resolution" value="1.30 A"/>
    <property type="chains" value="A=535-592"/>
</dbReference>
<dbReference type="PDB" id="2K3B">
    <property type="method" value="NMR"/>
    <property type="chains" value="A=535-592"/>
</dbReference>
<dbReference type="PDB" id="2RPN">
    <property type="method" value="NMR"/>
    <property type="chains" value="A=535-592"/>
</dbReference>
<dbReference type="PDBsum" id="1HQZ"/>
<dbReference type="PDBsum" id="1JO8"/>
<dbReference type="PDBsum" id="2K3B"/>
<dbReference type="PDBsum" id="2RPN"/>
<dbReference type="BMRB" id="P15891"/>
<dbReference type="SMR" id="P15891"/>
<dbReference type="BioGRID" id="31060">
    <property type="interactions" value="184"/>
</dbReference>
<dbReference type="DIP" id="DIP-534N"/>
<dbReference type="FunCoup" id="P15891">
    <property type="interactions" value="692"/>
</dbReference>
<dbReference type="IntAct" id="P15891">
    <property type="interactions" value="57"/>
</dbReference>
<dbReference type="MINT" id="P15891"/>
<dbReference type="STRING" id="4932.YCR088W"/>
<dbReference type="iPTMnet" id="P15891"/>
<dbReference type="PaxDb" id="4932-YCR088W"/>
<dbReference type="PeptideAtlas" id="P15891"/>
<dbReference type="EnsemblFungi" id="YCR088W_mRNA">
    <property type="protein sequence ID" value="YCR088W"/>
    <property type="gene ID" value="YCR088W"/>
</dbReference>
<dbReference type="GeneID" id="850450"/>
<dbReference type="KEGG" id="sce:YCR088W"/>
<dbReference type="AGR" id="SGD:S000000684"/>
<dbReference type="SGD" id="S000000684">
    <property type="gene designation" value="ABP1"/>
</dbReference>
<dbReference type="VEuPathDB" id="FungiDB:YCR088W"/>
<dbReference type="eggNOG" id="KOG3655">
    <property type="taxonomic scope" value="Eukaryota"/>
</dbReference>
<dbReference type="GeneTree" id="ENSGT00940000168710"/>
<dbReference type="HOGENOM" id="CLU_459326_0_0_1"/>
<dbReference type="InParanoid" id="P15891"/>
<dbReference type="OMA" id="HYASQYD"/>
<dbReference type="OrthoDB" id="5971719at2759"/>
<dbReference type="BioCyc" id="YEAST:G3O-29382-MONOMER"/>
<dbReference type="BioGRID-ORCS" id="850450">
    <property type="hits" value="2 hits in 10 CRISPR screens"/>
</dbReference>
<dbReference type="CD-CODE" id="E019EF73">
    <property type="entry name" value="Ede1 condensate"/>
</dbReference>
<dbReference type="CD-CODE" id="E03F929F">
    <property type="entry name" value="Stress granule"/>
</dbReference>
<dbReference type="EvolutionaryTrace" id="P15891"/>
<dbReference type="PRO" id="PR:P15891"/>
<dbReference type="Proteomes" id="UP000002311">
    <property type="component" value="Chromosome III"/>
</dbReference>
<dbReference type="RNAct" id="P15891">
    <property type="molecule type" value="protein"/>
</dbReference>
<dbReference type="GO" id="GO:0030479">
    <property type="term" value="C:actin cortical patch"/>
    <property type="evidence" value="ECO:0000314"/>
    <property type="project" value="SGD"/>
</dbReference>
<dbReference type="GO" id="GO:0005938">
    <property type="term" value="C:cell cortex"/>
    <property type="evidence" value="ECO:0000314"/>
    <property type="project" value="SGD"/>
</dbReference>
<dbReference type="GO" id="GO:0030864">
    <property type="term" value="C:cortical actin cytoskeleton"/>
    <property type="evidence" value="ECO:0000318"/>
    <property type="project" value="GO_Central"/>
</dbReference>
<dbReference type="GO" id="GO:0005737">
    <property type="term" value="C:cytoplasm"/>
    <property type="evidence" value="ECO:0007005"/>
    <property type="project" value="SGD"/>
</dbReference>
<dbReference type="GO" id="GO:0043332">
    <property type="term" value="C:mating projection tip"/>
    <property type="evidence" value="ECO:0007005"/>
    <property type="project" value="SGD"/>
</dbReference>
<dbReference type="GO" id="GO:0030427">
    <property type="term" value="C:site of polarized growth"/>
    <property type="evidence" value="ECO:0000318"/>
    <property type="project" value="GO_Central"/>
</dbReference>
<dbReference type="GO" id="GO:0051015">
    <property type="term" value="F:actin filament binding"/>
    <property type="evidence" value="ECO:0000314"/>
    <property type="project" value="SGD"/>
</dbReference>
<dbReference type="GO" id="GO:0000147">
    <property type="term" value="P:actin cortical patch assembly"/>
    <property type="evidence" value="ECO:0000315"/>
    <property type="project" value="SGD"/>
</dbReference>
<dbReference type="GO" id="GO:0051016">
    <property type="term" value="P:barbed-end actin filament capping"/>
    <property type="evidence" value="ECO:0000315"/>
    <property type="project" value="SGD"/>
</dbReference>
<dbReference type="GO" id="GO:2000601">
    <property type="term" value="P:positive regulation of Arp2/3 complex-mediated actin nucleation"/>
    <property type="evidence" value="ECO:0000314"/>
    <property type="project" value="SGD"/>
</dbReference>
<dbReference type="GO" id="GO:0044379">
    <property type="term" value="P:protein localization to actin cortical patch"/>
    <property type="evidence" value="ECO:0000315"/>
    <property type="project" value="SGD"/>
</dbReference>
<dbReference type="GO" id="GO:0030833">
    <property type="term" value="P:regulation of actin filament polymerization"/>
    <property type="evidence" value="ECO:0000318"/>
    <property type="project" value="GO_Central"/>
</dbReference>
<dbReference type="CDD" id="cd11281">
    <property type="entry name" value="ADF_drebrin_like"/>
    <property type="match status" value="1"/>
</dbReference>
<dbReference type="CDD" id="cd11961">
    <property type="entry name" value="SH3_Abp1_fungi_C2"/>
    <property type="match status" value="1"/>
</dbReference>
<dbReference type="FunFam" id="2.30.30.40:FF:000277">
    <property type="entry name" value="Actin-binding protein"/>
    <property type="match status" value="1"/>
</dbReference>
<dbReference type="FunFam" id="3.40.20.10:FF:000052">
    <property type="entry name" value="Actin-binding protein"/>
    <property type="match status" value="1"/>
</dbReference>
<dbReference type="Gene3D" id="3.40.20.10">
    <property type="entry name" value="Severin"/>
    <property type="match status" value="1"/>
</dbReference>
<dbReference type="Gene3D" id="2.30.30.40">
    <property type="entry name" value="SH3 Domains"/>
    <property type="match status" value="1"/>
</dbReference>
<dbReference type="InterPro" id="IPR035718">
    <property type="entry name" value="Abp1_fungi_SH3_C2"/>
</dbReference>
<dbReference type="InterPro" id="IPR002108">
    <property type="entry name" value="ADF-H"/>
</dbReference>
<dbReference type="InterPro" id="IPR029006">
    <property type="entry name" value="ADF-H/Gelsolin-like_dom_sf"/>
</dbReference>
<dbReference type="InterPro" id="IPR036028">
    <property type="entry name" value="SH3-like_dom_sf"/>
</dbReference>
<dbReference type="InterPro" id="IPR001452">
    <property type="entry name" value="SH3_domain"/>
</dbReference>
<dbReference type="PANTHER" id="PTHR10829">
    <property type="entry name" value="CORTACTIN AND DREBRIN"/>
    <property type="match status" value="1"/>
</dbReference>
<dbReference type="PANTHER" id="PTHR10829:SF25">
    <property type="entry name" value="DREBRIN-LIKE PROTEIN"/>
    <property type="match status" value="1"/>
</dbReference>
<dbReference type="Pfam" id="PF00241">
    <property type="entry name" value="Cofilin_ADF"/>
    <property type="match status" value="1"/>
</dbReference>
<dbReference type="Pfam" id="PF00018">
    <property type="entry name" value="SH3_1"/>
    <property type="match status" value="1"/>
</dbReference>
<dbReference type="PRINTS" id="PR00499">
    <property type="entry name" value="P67PHOX"/>
</dbReference>
<dbReference type="PRINTS" id="PR00452">
    <property type="entry name" value="SH3DOMAIN"/>
</dbReference>
<dbReference type="SMART" id="SM00102">
    <property type="entry name" value="ADF"/>
    <property type="match status" value="1"/>
</dbReference>
<dbReference type="SMART" id="SM00326">
    <property type="entry name" value="SH3"/>
    <property type="match status" value="1"/>
</dbReference>
<dbReference type="SUPFAM" id="SSF55753">
    <property type="entry name" value="Actin depolymerizing proteins"/>
    <property type="match status" value="1"/>
</dbReference>
<dbReference type="SUPFAM" id="SSF50044">
    <property type="entry name" value="SH3-domain"/>
    <property type="match status" value="1"/>
</dbReference>
<dbReference type="PROSITE" id="PS51263">
    <property type="entry name" value="ADF_H"/>
    <property type="match status" value="1"/>
</dbReference>
<dbReference type="PROSITE" id="PS50002">
    <property type="entry name" value="SH3"/>
    <property type="match status" value="1"/>
</dbReference>
<keyword id="KW-0002">3D-structure</keyword>
<keyword id="KW-0007">Acetylation</keyword>
<keyword id="KW-0009">Actin-binding</keyword>
<keyword id="KW-0963">Cytoplasm</keyword>
<keyword id="KW-0206">Cytoskeleton</keyword>
<keyword id="KW-0903">Direct protein sequencing</keyword>
<keyword id="KW-1017">Isopeptide bond</keyword>
<keyword id="KW-0597">Phosphoprotein</keyword>
<keyword id="KW-1185">Reference proteome</keyword>
<keyword id="KW-0677">Repeat</keyword>
<keyword id="KW-0728">SH3 domain</keyword>
<keyword id="KW-0832">Ubl conjugation</keyword>
<evidence type="ECO:0000255" key="1">
    <source>
        <dbReference type="PROSITE-ProRule" id="PRU00192"/>
    </source>
</evidence>
<evidence type="ECO:0000255" key="2">
    <source>
        <dbReference type="PROSITE-ProRule" id="PRU00599"/>
    </source>
</evidence>
<evidence type="ECO:0000256" key="3">
    <source>
        <dbReference type="SAM" id="MobiDB-lite"/>
    </source>
</evidence>
<evidence type="ECO:0000269" key="4">
    <source>
    </source>
</evidence>
<evidence type="ECO:0000269" key="5">
    <source>
    </source>
</evidence>
<evidence type="ECO:0000269" key="6">
    <source>
    </source>
</evidence>
<evidence type="ECO:0000269" key="7">
    <source>
    </source>
</evidence>
<evidence type="ECO:0000269" key="8">
    <source>
    </source>
</evidence>
<evidence type="ECO:0000269" key="9">
    <source>
    </source>
</evidence>
<evidence type="ECO:0000269" key="10">
    <source>
    </source>
</evidence>
<evidence type="ECO:0000269" key="11">
    <source>
    </source>
</evidence>
<evidence type="ECO:0000269" key="12">
    <source>
    </source>
</evidence>
<evidence type="ECO:0000269" key="13">
    <source ref="4"/>
</evidence>
<evidence type="ECO:0000305" key="14"/>
<evidence type="ECO:0007744" key="15">
    <source>
    </source>
</evidence>
<evidence type="ECO:0007744" key="16">
    <source>
    </source>
</evidence>
<evidence type="ECO:0007744" key="17">
    <source>
    </source>
</evidence>
<evidence type="ECO:0007744" key="18">
    <source>
    </source>
</evidence>
<evidence type="ECO:0007744" key="19">
    <source>
    </source>
</evidence>
<evidence type="ECO:0007744" key="20">
    <source>
    </source>
</evidence>
<evidence type="ECO:0007829" key="21">
    <source>
        <dbReference type="PDB" id="1HQZ"/>
    </source>
</evidence>
<evidence type="ECO:0007829" key="22">
    <source>
        <dbReference type="PDB" id="1JO8"/>
    </source>
</evidence>
<evidence type="ECO:0007829" key="23">
    <source>
        <dbReference type="PDB" id="2RPN"/>
    </source>
</evidence>
<comment type="function">
    <text evidence="5">Regulates ARP2/3 complex-mediated actin assembly. Recruits ARP2/3 complex to sides of preexisting actin filaments, which may promote nucleation or stabilization of filament branches. Binds to actin filaments, but not actin monomers. Actin binding is required for ARP2/3 complex activation. May also have a role in linking the actin cytoskeleton to endocytosis. recruits components of the endocytotic machinery to cortical actin patches, known sites of endocytosis.</text>
</comment>
<comment type="subunit">
    <text evidence="4 5 6 7 10 12">Binds F-actin, but not G-actin. Interacts with the ARP2/3 complex. Interacts with APP1, ARK1, PRK1, SCP1, SRV2 and YIR003W via its SH3 domain. Interacts with the SH3 domain of RVS167 and with SLA1.</text>
</comment>
<comment type="interaction">
    <interactant intactId="EBI-2036">
        <id>P15891</id>
    </interactant>
    <interactant intactId="EBI-25376">
        <id>P40563</id>
        <label>AIM21</label>
    </interactant>
    <organismsDiffer>false</organismsDiffer>
    <experiments>10</experiments>
</comment>
<comment type="interaction">
    <interactant intactId="EBI-2036">
        <id>P15891</id>
    </interactant>
    <interactant intactId="EBI-21584">
        <id>P38266</id>
        <label>AIM3</label>
    </interactant>
    <organismsDiffer>false</organismsDiffer>
    <experiments>2</experiments>
</comment>
<comment type="interaction">
    <interactant intactId="EBI-2036">
        <id>P15891</id>
    </interactant>
    <interactant intactId="EBI-28798">
        <id>P53933</id>
        <label>APP1</label>
    </interactant>
    <organismsDiffer>false</organismsDiffer>
    <experiments>12</experiments>
</comment>
<comment type="interaction">
    <interactant intactId="EBI-2036">
        <id>P15891</id>
    </interactant>
    <interactant intactId="EBI-9817">
        <id>P53974</id>
        <label>ARK1</label>
    </interactant>
    <organismsDiffer>false</organismsDiffer>
    <experiments>13</experiments>
</comment>
<comment type="interaction">
    <interactant intactId="EBI-2036">
        <id>P15891</id>
    </interactant>
    <interactant intactId="EBI-37047">
        <id>Q06604</id>
        <label>BSP1</label>
    </interactant>
    <organismsDiffer>false</organismsDiffer>
    <experiments>2</experiments>
</comment>
<comment type="interaction">
    <interactant intactId="EBI-2036">
        <id>P15891</id>
    </interactant>
    <interactant intactId="EBI-37262">
        <id>Q12134</id>
        <label>HUA2</label>
    </interactant>
    <organismsDiffer>false</organismsDiffer>
    <experiments>4</experiments>
</comment>
<comment type="interaction">
    <interactant intactId="EBI-2036">
        <id>P15891</id>
    </interactant>
    <interactant intactId="EBI-28834">
        <id>P50942</id>
        <label>INP52</label>
    </interactant>
    <organismsDiffer>false</organismsDiffer>
    <experiments>3</experiments>
</comment>
<comment type="interaction">
    <interactant intactId="EBI-2036">
        <id>P15891</id>
    </interactant>
    <interactant intactId="EBI-22980">
        <id>P43603</id>
        <label>LSB3</label>
    </interactant>
    <organismsDiffer>false</organismsDiffer>
    <experiments>6</experiments>
</comment>
<comment type="interaction">
    <interactant intactId="EBI-2036">
        <id>P15891</id>
    </interactant>
    <interactant intactId="EBI-9703">
        <id>P40494</id>
        <label>PRK1</label>
    </interactant>
    <organismsDiffer>false</organismsDiffer>
    <experiments>12</experiments>
</comment>
<comment type="interaction">
    <interactant intactId="EBI-2036">
        <id>P15891</id>
    </interactant>
    <interactant intactId="EBI-14500">
        <id>P39743</id>
        <label>RVS167</label>
    </interactant>
    <organismsDiffer>false</organismsDiffer>
    <experiments>6</experiments>
</comment>
<comment type="interaction">
    <interactant intactId="EBI-2036">
        <id>P15891</id>
    </interactant>
    <interactant intactId="EBI-33137">
        <id>Q08873</id>
        <label>SCP1</label>
    </interactant>
    <organismsDiffer>false</organismsDiffer>
    <experiments>7</experiments>
</comment>
<comment type="interaction">
    <interactant intactId="EBI-2036">
        <id>P15891</id>
    </interactant>
    <interactant intactId="EBI-17313">
        <id>P32790</id>
        <label>SLA1</label>
    </interactant>
    <organismsDiffer>false</organismsDiffer>
    <experiments>4</experiments>
</comment>
<comment type="interaction">
    <interactant intactId="EBI-2036">
        <id>P15891</id>
    </interactant>
    <interactant intactId="EBI-4024">
        <id>P17555</id>
        <label>SRV2</label>
    </interactant>
    <organismsDiffer>false</organismsDiffer>
    <experiments>9</experiments>
</comment>
<comment type="interaction">
    <interactant intactId="EBI-2036">
        <id>P15891</id>
    </interactant>
    <interactant intactId="EBI-24460">
        <id>P32793</id>
        <label>YSC84</label>
    </interactant>
    <organismsDiffer>false</organismsDiffer>
    <experiments>5</experiments>
</comment>
<comment type="subcellular location">
    <subcellularLocation>
        <location evidence="7 8 11">Cytoplasm</location>
        <location evidence="7 8 11">Cytoskeleton</location>
        <location evidence="7 8 11">Actin patch</location>
    </subcellularLocation>
    <text>Cortical actin patches.</text>
</comment>
<comment type="PTM">
    <text>The actin depolymerizing factor homology (ADF) domain mediates actin filament binding.</text>
</comment>
<comment type="miscellaneous">
    <text evidence="9">Present with 606 molecules/cell in log phase SD medium.</text>
</comment>
<comment type="similarity">
    <text evidence="14">Belongs to the ABP1 family.</text>
</comment>
<proteinExistence type="evidence at protein level"/>
<accession>P15891</accession>
<accession>D6VR88</accession>
<gene>
    <name type="primary">ABP1</name>
    <name type="ordered locus">YCR088W</name>
    <name type="ORF">YCR88W</name>
</gene>